<protein>
    <recommendedName>
        <fullName evidence="1">Large ribosomal subunit protein bL20</fullName>
    </recommendedName>
    <alternativeName>
        <fullName evidence="2">50S ribosomal protein L20</fullName>
    </alternativeName>
</protein>
<keyword id="KW-0687">Ribonucleoprotein</keyword>
<keyword id="KW-0689">Ribosomal protein</keyword>
<keyword id="KW-0694">RNA-binding</keyword>
<keyword id="KW-0699">rRNA-binding</keyword>
<accession>A0RM90</accession>
<name>RL20_CAMFF</name>
<proteinExistence type="inferred from homology"/>
<sequence length="117" mass="13682">MARVKTGVVRRRRHKKVLKLARGFYSARHKHFRKAKEQLERSLVYAFRDRRAKKRDFRRLWIIRINAACRLNDISYSRFMNGLKKANIALDRKVLANLAMNDAAAFAAIVAEAKKAL</sequence>
<feature type="chain" id="PRO_1000048949" description="Large ribosomal subunit protein bL20">
    <location>
        <begin position="1"/>
        <end position="117"/>
    </location>
</feature>
<dbReference type="EMBL" id="CP000487">
    <property type="protein sequence ID" value="ABK82241.1"/>
    <property type="molecule type" value="Genomic_DNA"/>
</dbReference>
<dbReference type="RefSeq" id="WP_002848108.1">
    <property type="nucleotide sequence ID" value="NC_008599.1"/>
</dbReference>
<dbReference type="SMR" id="A0RM90"/>
<dbReference type="GeneID" id="61063959"/>
<dbReference type="KEGG" id="cff:CFF8240_0113"/>
<dbReference type="eggNOG" id="COG0292">
    <property type="taxonomic scope" value="Bacteria"/>
</dbReference>
<dbReference type="HOGENOM" id="CLU_123265_0_1_7"/>
<dbReference type="Proteomes" id="UP000000760">
    <property type="component" value="Chromosome"/>
</dbReference>
<dbReference type="GO" id="GO:1990904">
    <property type="term" value="C:ribonucleoprotein complex"/>
    <property type="evidence" value="ECO:0007669"/>
    <property type="project" value="UniProtKB-KW"/>
</dbReference>
<dbReference type="GO" id="GO:0005840">
    <property type="term" value="C:ribosome"/>
    <property type="evidence" value="ECO:0007669"/>
    <property type="project" value="UniProtKB-KW"/>
</dbReference>
<dbReference type="GO" id="GO:0019843">
    <property type="term" value="F:rRNA binding"/>
    <property type="evidence" value="ECO:0007669"/>
    <property type="project" value="UniProtKB-UniRule"/>
</dbReference>
<dbReference type="GO" id="GO:0003735">
    <property type="term" value="F:structural constituent of ribosome"/>
    <property type="evidence" value="ECO:0007669"/>
    <property type="project" value="InterPro"/>
</dbReference>
<dbReference type="GO" id="GO:0000027">
    <property type="term" value="P:ribosomal large subunit assembly"/>
    <property type="evidence" value="ECO:0007669"/>
    <property type="project" value="UniProtKB-UniRule"/>
</dbReference>
<dbReference type="GO" id="GO:0006412">
    <property type="term" value="P:translation"/>
    <property type="evidence" value="ECO:0007669"/>
    <property type="project" value="InterPro"/>
</dbReference>
<dbReference type="CDD" id="cd07026">
    <property type="entry name" value="Ribosomal_L20"/>
    <property type="match status" value="1"/>
</dbReference>
<dbReference type="FunFam" id="1.10.1900.20:FF:000001">
    <property type="entry name" value="50S ribosomal protein L20"/>
    <property type="match status" value="1"/>
</dbReference>
<dbReference type="Gene3D" id="6.10.160.10">
    <property type="match status" value="1"/>
</dbReference>
<dbReference type="Gene3D" id="1.10.1900.20">
    <property type="entry name" value="Ribosomal protein L20"/>
    <property type="match status" value="1"/>
</dbReference>
<dbReference type="HAMAP" id="MF_00382">
    <property type="entry name" value="Ribosomal_bL20"/>
    <property type="match status" value="1"/>
</dbReference>
<dbReference type="InterPro" id="IPR005813">
    <property type="entry name" value="Ribosomal_bL20"/>
</dbReference>
<dbReference type="InterPro" id="IPR049946">
    <property type="entry name" value="RIBOSOMAL_L20_CS"/>
</dbReference>
<dbReference type="InterPro" id="IPR035566">
    <property type="entry name" value="Ribosomal_protein_bL20_C"/>
</dbReference>
<dbReference type="NCBIfam" id="TIGR01032">
    <property type="entry name" value="rplT_bact"/>
    <property type="match status" value="1"/>
</dbReference>
<dbReference type="PANTHER" id="PTHR10986">
    <property type="entry name" value="39S RIBOSOMAL PROTEIN L20"/>
    <property type="match status" value="1"/>
</dbReference>
<dbReference type="Pfam" id="PF00453">
    <property type="entry name" value="Ribosomal_L20"/>
    <property type="match status" value="1"/>
</dbReference>
<dbReference type="PRINTS" id="PR00062">
    <property type="entry name" value="RIBOSOMALL20"/>
</dbReference>
<dbReference type="SUPFAM" id="SSF74731">
    <property type="entry name" value="Ribosomal protein L20"/>
    <property type="match status" value="1"/>
</dbReference>
<dbReference type="PROSITE" id="PS00937">
    <property type="entry name" value="RIBOSOMAL_L20"/>
    <property type="match status" value="1"/>
</dbReference>
<organism>
    <name type="scientific">Campylobacter fetus subsp. fetus (strain 82-40)</name>
    <dbReference type="NCBI Taxonomy" id="360106"/>
    <lineage>
        <taxon>Bacteria</taxon>
        <taxon>Pseudomonadati</taxon>
        <taxon>Campylobacterota</taxon>
        <taxon>Epsilonproteobacteria</taxon>
        <taxon>Campylobacterales</taxon>
        <taxon>Campylobacteraceae</taxon>
        <taxon>Campylobacter</taxon>
    </lineage>
</organism>
<comment type="function">
    <text evidence="1">Binds directly to 23S ribosomal RNA and is necessary for the in vitro assembly process of the 50S ribosomal subunit. It is not involved in the protein synthesizing functions of that subunit.</text>
</comment>
<comment type="similarity">
    <text evidence="1">Belongs to the bacterial ribosomal protein bL20 family.</text>
</comment>
<evidence type="ECO:0000255" key="1">
    <source>
        <dbReference type="HAMAP-Rule" id="MF_00382"/>
    </source>
</evidence>
<evidence type="ECO:0000305" key="2"/>
<reference key="1">
    <citation type="submission" date="2006-11" db="EMBL/GenBank/DDBJ databases">
        <title>Sequence of Campylobacter fetus subsp. fetus 82-40.</title>
        <authorList>
            <person name="Fouts D.E."/>
            <person name="Nelson K.E."/>
        </authorList>
    </citation>
    <scope>NUCLEOTIDE SEQUENCE [LARGE SCALE GENOMIC DNA]</scope>
    <source>
        <strain>82-40</strain>
    </source>
</reference>
<gene>
    <name evidence="1" type="primary">rplT</name>
    <name type="ordered locus">CFF8240_0113</name>
</gene>